<keyword id="KW-0067">ATP-binding</keyword>
<keyword id="KW-0238">DNA-binding</keyword>
<keyword id="KW-0479">Metal-binding</keyword>
<keyword id="KW-0547">Nucleotide-binding</keyword>
<keyword id="KW-1185">Reference proteome</keyword>
<keyword id="KW-0678">Repressor</keyword>
<keyword id="KW-0804">Transcription</keyword>
<keyword id="KW-0805">Transcription regulation</keyword>
<keyword id="KW-0862">Zinc</keyword>
<keyword id="KW-0863">Zinc-finger</keyword>
<name>NRDR_BIFLO</name>
<proteinExistence type="inferred from homology"/>
<evidence type="ECO:0000255" key="1">
    <source>
        <dbReference type="HAMAP-Rule" id="MF_00440"/>
    </source>
</evidence>
<evidence type="ECO:0000305" key="2"/>
<gene>
    <name evidence="1" type="primary">nrdR</name>
    <name type="ordered locus">BL1312</name>
</gene>
<feature type="chain" id="PRO_0000182270" description="Transcriptional repressor NrdR">
    <location>
        <begin position="1"/>
        <end position="146"/>
    </location>
</feature>
<feature type="domain" description="ATP-cone" evidence="1">
    <location>
        <begin position="46"/>
        <end position="136"/>
    </location>
</feature>
<feature type="zinc finger region" evidence="1">
    <location>
        <begin position="3"/>
        <end position="34"/>
    </location>
</feature>
<reference key="1">
    <citation type="journal article" date="2002" name="Proc. Natl. Acad. Sci. U.S.A.">
        <title>The genome sequence of Bifidobacterium longum reflects its adaptation to the human gastrointestinal tract.</title>
        <authorList>
            <person name="Schell M.A."/>
            <person name="Karmirantzou M."/>
            <person name="Snel B."/>
            <person name="Vilanova D."/>
            <person name="Berger B."/>
            <person name="Pessi G."/>
            <person name="Zwahlen M.-C."/>
            <person name="Desiere F."/>
            <person name="Bork P."/>
            <person name="Delley M."/>
            <person name="Pridmore R.D."/>
            <person name="Arigoni F."/>
        </authorList>
    </citation>
    <scope>NUCLEOTIDE SEQUENCE [LARGE SCALE GENOMIC DNA]</scope>
    <source>
        <strain>NCC 2705</strain>
    </source>
</reference>
<comment type="function">
    <text evidence="1">Negatively regulates transcription of bacterial ribonucleotide reductase nrd genes and operons by binding to NrdR-boxes.</text>
</comment>
<comment type="cofactor">
    <cofactor evidence="1">
        <name>Zn(2+)</name>
        <dbReference type="ChEBI" id="CHEBI:29105"/>
    </cofactor>
    <text evidence="1">Binds 1 zinc ion.</text>
</comment>
<comment type="similarity">
    <text evidence="1">Belongs to the NrdR family.</text>
</comment>
<comment type="sequence caution" evidence="2">
    <conflict type="erroneous initiation">
        <sequence resource="EMBL-CDS" id="AAN25112"/>
    </conflict>
</comment>
<accession>Q8G4R4</accession>
<sequence>MHCPFCQNPDTKVIDTRISDDGHSIRRRRVCPKCSKRFTTVETSMLLVTKRSGGVEPFSRDKVISGVRKACQGRPVREEDLKLLGQKVEEDLRSRGLAEVTSDEVGKAILKPLRDLDVVAYLRFASVYQNFAGLEDFQSAIDGLRE</sequence>
<organism>
    <name type="scientific">Bifidobacterium longum (strain NCC 2705)</name>
    <dbReference type="NCBI Taxonomy" id="206672"/>
    <lineage>
        <taxon>Bacteria</taxon>
        <taxon>Bacillati</taxon>
        <taxon>Actinomycetota</taxon>
        <taxon>Actinomycetes</taxon>
        <taxon>Bifidobacteriales</taxon>
        <taxon>Bifidobacteriaceae</taxon>
        <taxon>Bifidobacterium</taxon>
    </lineage>
</organism>
<dbReference type="EMBL" id="AE014295">
    <property type="protein sequence ID" value="AAN25112.1"/>
    <property type="status" value="ALT_INIT"/>
    <property type="molecule type" value="Genomic_DNA"/>
</dbReference>
<dbReference type="RefSeq" id="NP_696476.2">
    <property type="nucleotide sequence ID" value="NC_004307.2"/>
</dbReference>
<dbReference type="RefSeq" id="WP_007056380.1">
    <property type="nucleotide sequence ID" value="NC_004307.2"/>
</dbReference>
<dbReference type="SMR" id="Q8G4R4"/>
<dbReference type="STRING" id="206672.BL1312"/>
<dbReference type="EnsemblBacteria" id="AAN25112">
    <property type="protein sequence ID" value="AAN25112"/>
    <property type="gene ID" value="BL1312"/>
</dbReference>
<dbReference type="GeneID" id="69579155"/>
<dbReference type="KEGG" id="blo:BL1312"/>
<dbReference type="PATRIC" id="fig|206672.9.peg.162"/>
<dbReference type="HOGENOM" id="CLU_108412_1_0_11"/>
<dbReference type="OrthoDB" id="9807461at2"/>
<dbReference type="PhylomeDB" id="Q8G4R4"/>
<dbReference type="Proteomes" id="UP000000439">
    <property type="component" value="Chromosome"/>
</dbReference>
<dbReference type="GO" id="GO:0005524">
    <property type="term" value="F:ATP binding"/>
    <property type="evidence" value="ECO:0007669"/>
    <property type="project" value="UniProtKB-KW"/>
</dbReference>
<dbReference type="GO" id="GO:0003677">
    <property type="term" value="F:DNA binding"/>
    <property type="evidence" value="ECO:0007669"/>
    <property type="project" value="UniProtKB-KW"/>
</dbReference>
<dbReference type="GO" id="GO:0008270">
    <property type="term" value="F:zinc ion binding"/>
    <property type="evidence" value="ECO:0007669"/>
    <property type="project" value="UniProtKB-UniRule"/>
</dbReference>
<dbReference type="GO" id="GO:0045892">
    <property type="term" value="P:negative regulation of DNA-templated transcription"/>
    <property type="evidence" value="ECO:0007669"/>
    <property type="project" value="UniProtKB-UniRule"/>
</dbReference>
<dbReference type="HAMAP" id="MF_00440">
    <property type="entry name" value="NrdR"/>
    <property type="match status" value="1"/>
</dbReference>
<dbReference type="InterPro" id="IPR005144">
    <property type="entry name" value="ATP-cone_dom"/>
</dbReference>
<dbReference type="InterPro" id="IPR055173">
    <property type="entry name" value="NrdR-like_N"/>
</dbReference>
<dbReference type="InterPro" id="IPR003796">
    <property type="entry name" value="RNR_NrdR-like"/>
</dbReference>
<dbReference type="NCBIfam" id="TIGR00244">
    <property type="entry name" value="transcriptional regulator NrdR"/>
    <property type="match status" value="1"/>
</dbReference>
<dbReference type="PANTHER" id="PTHR30455">
    <property type="entry name" value="TRANSCRIPTIONAL REPRESSOR NRDR"/>
    <property type="match status" value="1"/>
</dbReference>
<dbReference type="PANTHER" id="PTHR30455:SF2">
    <property type="entry name" value="TRANSCRIPTIONAL REPRESSOR NRDR"/>
    <property type="match status" value="1"/>
</dbReference>
<dbReference type="Pfam" id="PF03477">
    <property type="entry name" value="ATP-cone"/>
    <property type="match status" value="1"/>
</dbReference>
<dbReference type="Pfam" id="PF22811">
    <property type="entry name" value="Zn_ribbon_NrdR"/>
    <property type="match status" value="1"/>
</dbReference>
<dbReference type="PROSITE" id="PS51161">
    <property type="entry name" value="ATP_CONE"/>
    <property type="match status" value="1"/>
</dbReference>
<protein>
    <recommendedName>
        <fullName evidence="1">Transcriptional repressor NrdR</fullName>
    </recommendedName>
</protein>